<gene>
    <name type="primary">smpI</name>
</gene>
<accession>P01077</accession>
<protein>
    <recommendedName>
        <fullName>Metalloproteinase inhibitor</fullName>
    </recommendedName>
</protein>
<keyword id="KW-0002">3D-structure</keyword>
<keyword id="KW-0903">Direct protein sequencing</keyword>
<keyword id="KW-1015">Disulfide bond</keyword>
<keyword id="KW-0481">Metalloenzyme inhibitor</keyword>
<keyword id="KW-0483">Metalloprotease inhibitor</keyword>
<keyword id="KW-0646">Protease inhibitor</keyword>
<keyword id="KW-0732">Signal</keyword>
<reference key="1">
    <citation type="journal article" date="1990" name="Nucleic Acids Res.">
        <title>Nucleotide sequence of the gene for a metalloproteinase inhibitor of Streptomyces nigrescens (SMPI).</title>
        <authorList>
            <person name="Tanaka K."/>
            <person name="Aoki H."/>
            <person name="Oda K."/>
            <person name="Murao S."/>
            <person name="Saito H."/>
            <person name="Takahashi H."/>
        </authorList>
    </citation>
    <scope>NUCLEOTIDE SEQUENCE [GENOMIC DNA]</scope>
</reference>
<reference key="2">
    <citation type="journal article" date="1985" name="J. Biochem.">
        <title>Amino acid sequence of Streptomyces metallo-proteinase inhibitor from Streptomyces nigrescens TK-23.</title>
        <authorList>
            <person name="Murai H."/>
            <person name="Hara S."/>
            <person name="Ikenaka T."/>
            <person name="Oda K."/>
            <person name="Murao S."/>
        </authorList>
    </citation>
    <scope>PROTEIN SEQUENCE OF 30-131</scope>
    <scope>DISULFIDE BONDS</scope>
    <source>
        <strain>TK-23</strain>
    </source>
</reference>
<reference key="3">
    <citation type="journal article" date="1998" name="J. Mol. Biol.">
        <title>NMR structure of the Streptomyces metalloproteinase inhibitor, SMPI, isolated from Streptomyces nigrescens TK-23: another example of an ancestral beta gamma-crystallin precursor structure.</title>
        <authorList>
            <person name="Ohno A."/>
            <person name="Tate S."/>
            <person name="Seeram S.S."/>
            <person name="Hiraga K."/>
            <person name="Swindells M.B."/>
            <person name="Oda K."/>
            <person name="Kainosho M."/>
        </authorList>
    </citation>
    <scope>STRUCTURE BY NMR</scope>
    <source>
        <strain>TK-23</strain>
    </source>
</reference>
<evidence type="ECO:0000269" key="1">
    <source>
    </source>
</evidence>
<evidence type="ECO:0007829" key="2">
    <source>
        <dbReference type="PDB" id="1BHU"/>
    </source>
</evidence>
<proteinExistence type="evidence at protein level"/>
<feature type="signal peptide" evidence="1">
    <location>
        <begin position="1"/>
        <end position="29"/>
    </location>
</feature>
<feature type="chain" id="PRO_0000021509" description="Metalloproteinase inhibitor">
    <location>
        <begin position="30"/>
        <end position="131"/>
    </location>
</feature>
<feature type="disulfide bond" evidence="1">
    <location>
        <begin position="33"/>
        <end position="39"/>
    </location>
</feature>
<feature type="disulfide bond" evidence="1">
    <location>
        <begin position="93"/>
        <end position="98"/>
    </location>
</feature>
<feature type="strand" evidence="2">
    <location>
        <begin position="35"/>
        <end position="38"/>
    </location>
</feature>
<feature type="strand" evidence="2">
    <location>
        <begin position="41"/>
        <end position="46"/>
    </location>
</feature>
<feature type="strand" evidence="2">
    <location>
        <begin position="53"/>
        <end position="56"/>
    </location>
</feature>
<feature type="helix" evidence="2">
    <location>
        <begin position="58"/>
        <end position="61"/>
    </location>
</feature>
<feature type="strand" evidence="2">
    <location>
        <begin position="74"/>
        <end position="76"/>
    </location>
</feature>
<feature type="strand" evidence="2">
    <location>
        <begin position="82"/>
        <end position="87"/>
    </location>
</feature>
<feature type="strand" evidence="2">
    <location>
        <begin position="94"/>
        <end position="96"/>
    </location>
</feature>
<feature type="turn" evidence="2">
    <location>
        <begin position="108"/>
        <end position="111"/>
    </location>
</feature>
<feature type="strand" evidence="2">
    <location>
        <begin position="112"/>
        <end position="118"/>
    </location>
</feature>
<feature type="strand" evidence="2">
    <location>
        <begin position="121"/>
        <end position="129"/>
    </location>
</feature>
<organism>
    <name type="scientific">Streptomyces nigrescens</name>
    <dbReference type="NCBI Taxonomy" id="1920"/>
    <lineage>
        <taxon>Bacteria</taxon>
        <taxon>Bacillati</taxon>
        <taxon>Actinomycetota</taxon>
        <taxon>Actinomycetes</taxon>
        <taxon>Kitasatosporales</taxon>
        <taxon>Streptomycetaceae</taxon>
        <taxon>Streptomyces</taxon>
    </lineage>
</organism>
<sequence>MVRKRALGLAGSALTLVLGAVGFTAPAQAAPSCPAGSLCTYSGTGLSGARTVIPASDMEKAGTDGVKLPASARSFANGTHFTLRYGPARKVTCVRFPCYQYATVGKVAPGAQLRSLPSPGATVTVGQDLGD</sequence>
<comment type="function">
    <text>Inhibits microbial metallo-proteinases, such as thermolysin, but not serine, thiol, or carboxyl proteinases.</text>
</comment>
<comment type="miscellaneous">
    <text>Thermolysin slowly cleaves only the peptide bond following Cys-93.</text>
</comment>
<name>IMEP_STRNI</name>
<dbReference type="EMBL" id="D00671">
    <property type="protein sequence ID" value="BAA00574.1"/>
    <property type="molecule type" value="Genomic_DNA"/>
</dbReference>
<dbReference type="PIR" id="S12615">
    <property type="entry name" value="ZYSMN"/>
</dbReference>
<dbReference type="PDB" id="1BHU">
    <property type="method" value="NMR"/>
    <property type="chains" value="A=30-131"/>
</dbReference>
<dbReference type="PDBsum" id="1BHU"/>
<dbReference type="BMRB" id="P01077"/>
<dbReference type="SMR" id="P01077"/>
<dbReference type="MEROPS" id="I36.001"/>
<dbReference type="EvolutionaryTrace" id="P01077"/>
<dbReference type="GO" id="GO:0030414">
    <property type="term" value="F:peptidase inhibitor activity"/>
    <property type="evidence" value="ECO:0007669"/>
    <property type="project" value="UniProtKB-KW"/>
</dbReference>
<dbReference type="Gene3D" id="2.60.20.30">
    <property type="match status" value="1"/>
</dbReference>
<dbReference type="InterPro" id="IPR015791">
    <property type="entry name" value="Antimic/Inh_G_crystallin-like"/>
</dbReference>
<dbReference type="InterPro" id="IPR011024">
    <property type="entry name" value="G_crystallin-like"/>
</dbReference>
<dbReference type="Pfam" id="PF03995">
    <property type="entry name" value="Inhibitor_I36"/>
    <property type="match status" value="1"/>
</dbReference>
<dbReference type="SUPFAM" id="SSF49695">
    <property type="entry name" value="gamma-Crystallin-like"/>
    <property type="match status" value="1"/>
</dbReference>